<comment type="function">
    <text evidence="1">Located on the platform of the 30S subunit.</text>
</comment>
<comment type="subunit">
    <text evidence="1">Part of the 30S ribosomal subunit.</text>
</comment>
<comment type="similarity">
    <text evidence="1">Belongs to the universal ribosomal protein uS11 family.</text>
</comment>
<accession>Q74N73</accession>
<name>RS11_NANEQ</name>
<protein>
    <recommendedName>
        <fullName evidence="1">Small ribosomal subunit protein uS11</fullName>
    </recommendedName>
    <alternativeName>
        <fullName evidence="2">30S ribosomal protein S11</fullName>
    </alternativeName>
</protein>
<organism>
    <name type="scientific">Nanoarchaeum equitans (strain Kin4-M)</name>
    <dbReference type="NCBI Taxonomy" id="228908"/>
    <lineage>
        <taxon>Archaea</taxon>
        <taxon>Nanobdellota</taxon>
        <taxon>Candidatus Nanoarchaeia</taxon>
        <taxon>Nanoarchaeales</taxon>
        <taxon>Nanoarchaeaceae</taxon>
        <taxon>Nanoarchaeum</taxon>
    </lineage>
</organism>
<evidence type="ECO:0000255" key="1">
    <source>
        <dbReference type="HAMAP-Rule" id="MF_01310"/>
    </source>
</evidence>
<evidence type="ECO:0000305" key="2"/>
<reference key="1">
    <citation type="journal article" date="2003" name="Proc. Natl. Acad. Sci. U.S.A.">
        <title>The genome of Nanoarchaeum equitans: insights into early archaeal evolution and derived parasitism.</title>
        <authorList>
            <person name="Waters E."/>
            <person name="Hohn M.J."/>
            <person name="Ahel I."/>
            <person name="Graham D.E."/>
            <person name="Adams M.D."/>
            <person name="Barnstead M."/>
            <person name="Beeson K.Y."/>
            <person name="Bibbs L."/>
            <person name="Bolanos R."/>
            <person name="Keller M."/>
            <person name="Kretz K."/>
            <person name="Lin X."/>
            <person name="Mathur E."/>
            <person name="Ni J."/>
            <person name="Podar M."/>
            <person name="Richardson T."/>
            <person name="Sutton G.G."/>
            <person name="Simon M."/>
            <person name="Soell D."/>
            <person name="Stetter K.O."/>
            <person name="Short J.M."/>
            <person name="Noorderwier M."/>
        </authorList>
    </citation>
    <scope>NUCLEOTIDE SEQUENCE [LARGE SCALE GENOMIC DNA]</scope>
    <source>
        <strain>Kin4-M</strain>
    </source>
</reference>
<gene>
    <name evidence="1" type="primary">rps11</name>
    <name type="ordered locus">NEQ069</name>
</gene>
<keyword id="KW-1185">Reference proteome</keyword>
<keyword id="KW-0687">Ribonucleoprotein</keyword>
<keyword id="KW-0689">Ribosomal protein</keyword>
<keyword id="KW-0694">RNA-binding</keyword>
<keyword id="KW-0699">rRNA-binding</keyword>
<proteinExistence type="inferred from homology"/>
<sequence>MAKERWGVAHIYSSENNTIIHITDITGAETIAVGSGGMVVNADRLEGSPTAAILAAKRAAALAKERGITGLHIKVRAPGGHNGPWIPGPGASAAIKTLAREGLKIGIIEDVTPTPHDGCRRKGGKRGRRV</sequence>
<dbReference type="EMBL" id="AE017199">
    <property type="protein sequence ID" value="AAR38924.1"/>
    <property type="molecule type" value="Genomic_DNA"/>
</dbReference>
<dbReference type="SMR" id="Q74N73"/>
<dbReference type="STRING" id="228908.NEQ069"/>
<dbReference type="EnsemblBacteria" id="AAR38924">
    <property type="protein sequence ID" value="AAR38924"/>
    <property type="gene ID" value="NEQ069"/>
</dbReference>
<dbReference type="KEGG" id="neq:NEQ069"/>
<dbReference type="PATRIC" id="fig|228908.8.peg.70"/>
<dbReference type="HOGENOM" id="CLU_072439_6_1_2"/>
<dbReference type="Proteomes" id="UP000000578">
    <property type="component" value="Chromosome"/>
</dbReference>
<dbReference type="GO" id="GO:1990904">
    <property type="term" value="C:ribonucleoprotein complex"/>
    <property type="evidence" value="ECO:0007669"/>
    <property type="project" value="UniProtKB-KW"/>
</dbReference>
<dbReference type="GO" id="GO:0005840">
    <property type="term" value="C:ribosome"/>
    <property type="evidence" value="ECO:0007669"/>
    <property type="project" value="UniProtKB-KW"/>
</dbReference>
<dbReference type="GO" id="GO:0019843">
    <property type="term" value="F:rRNA binding"/>
    <property type="evidence" value="ECO:0007669"/>
    <property type="project" value="UniProtKB-UniRule"/>
</dbReference>
<dbReference type="GO" id="GO:0003735">
    <property type="term" value="F:structural constituent of ribosome"/>
    <property type="evidence" value="ECO:0007669"/>
    <property type="project" value="InterPro"/>
</dbReference>
<dbReference type="GO" id="GO:0006412">
    <property type="term" value="P:translation"/>
    <property type="evidence" value="ECO:0007669"/>
    <property type="project" value="UniProtKB-UniRule"/>
</dbReference>
<dbReference type="FunFam" id="3.30.420.80:FF:000018">
    <property type="entry name" value="40S ribosomal protein S14"/>
    <property type="match status" value="1"/>
</dbReference>
<dbReference type="Gene3D" id="3.30.420.80">
    <property type="entry name" value="Ribosomal protein S11"/>
    <property type="match status" value="1"/>
</dbReference>
<dbReference type="HAMAP" id="MF_01310">
    <property type="entry name" value="Ribosomal_uS11"/>
    <property type="match status" value="1"/>
</dbReference>
<dbReference type="InterPro" id="IPR001971">
    <property type="entry name" value="Ribosomal_uS11"/>
</dbReference>
<dbReference type="InterPro" id="IPR019961">
    <property type="entry name" value="Ribosomal_uS11_archaeal"/>
</dbReference>
<dbReference type="InterPro" id="IPR036967">
    <property type="entry name" value="Ribosomal_uS11_sf"/>
</dbReference>
<dbReference type="NCBIfam" id="TIGR03628">
    <property type="entry name" value="arch_S11P"/>
    <property type="match status" value="1"/>
</dbReference>
<dbReference type="NCBIfam" id="NF007176">
    <property type="entry name" value="PRK09607.1"/>
    <property type="match status" value="1"/>
</dbReference>
<dbReference type="PANTHER" id="PTHR11759">
    <property type="entry name" value="40S RIBOSOMAL PROTEIN S14/30S RIBOSOMAL PROTEIN S11"/>
    <property type="match status" value="1"/>
</dbReference>
<dbReference type="Pfam" id="PF00411">
    <property type="entry name" value="Ribosomal_S11"/>
    <property type="match status" value="1"/>
</dbReference>
<dbReference type="PIRSF" id="PIRSF002131">
    <property type="entry name" value="Ribosomal_S11"/>
    <property type="match status" value="1"/>
</dbReference>
<dbReference type="SUPFAM" id="SSF53137">
    <property type="entry name" value="Translational machinery components"/>
    <property type="match status" value="1"/>
</dbReference>
<feature type="chain" id="PRO_0000294901" description="Small ribosomal subunit protein uS11">
    <location>
        <begin position="1"/>
        <end position="130"/>
    </location>
</feature>